<name>TOP3_STAAN</name>
<reference key="1">
    <citation type="journal article" date="2001" name="Lancet">
        <title>Whole genome sequencing of meticillin-resistant Staphylococcus aureus.</title>
        <authorList>
            <person name="Kuroda M."/>
            <person name="Ohta T."/>
            <person name="Uchiyama I."/>
            <person name="Baba T."/>
            <person name="Yuzawa H."/>
            <person name="Kobayashi I."/>
            <person name="Cui L."/>
            <person name="Oguchi A."/>
            <person name="Aoki K."/>
            <person name="Nagai Y."/>
            <person name="Lian J.-Q."/>
            <person name="Ito T."/>
            <person name="Kanamori M."/>
            <person name="Matsumaru H."/>
            <person name="Maruyama A."/>
            <person name="Murakami H."/>
            <person name="Hosoyama A."/>
            <person name="Mizutani-Ui Y."/>
            <person name="Takahashi N.K."/>
            <person name="Sawano T."/>
            <person name="Inoue R."/>
            <person name="Kaito C."/>
            <person name="Sekimizu K."/>
            <person name="Hirakawa H."/>
            <person name="Kuhara S."/>
            <person name="Goto S."/>
            <person name="Yabuzaki J."/>
            <person name="Kanehisa M."/>
            <person name="Yamashita A."/>
            <person name="Oshima K."/>
            <person name="Furuya K."/>
            <person name="Yoshino C."/>
            <person name="Shiba T."/>
            <person name="Hattori M."/>
            <person name="Ogasawara N."/>
            <person name="Hayashi H."/>
            <person name="Hiramatsu K."/>
        </authorList>
    </citation>
    <scope>NUCLEOTIDE SEQUENCE [LARGE SCALE GENOMIC DNA]</scope>
    <source>
        <strain>N315</strain>
    </source>
</reference>
<comment type="function">
    <text evidence="1">Releases the supercoiling and torsional tension of DNA, which is introduced during the DNA replication and transcription, by transiently cleaving and rejoining one strand of the DNA duplex. Introduces a single-strand break via transesterification at a target site in duplex DNA. The scissile phosphodiester is attacked by the catalytic tyrosine of the enzyme, resulting in the formation of a DNA-(5'-phosphotyrosyl)-enzyme intermediate and the expulsion of a 3'-OH DNA strand. The free DNA strand then undergoes passage around the unbroken strand, thus removing DNA supercoils. Finally, in the religation step, the DNA 3'-OH attacks the covalent intermediate to expel the active-site tyrosine and restore the DNA phosphodiester backbone.</text>
</comment>
<comment type="catalytic activity">
    <reaction evidence="1">
        <text>ATP-independent breakage of single-stranded DNA, followed by passage and rejoining.</text>
        <dbReference type="EC" id="5.6.2.1"/>
    </reaction>
</comment>
<comment type="cofactor">
    <cofactor evidence="1">
        <name>Mg(2+)</name>
        <dbReference type="ChEBI" id="CHEBI:18420"/>
    </cofactor>
</comment>
<comment type="similarity">
    <text evidence="1 2">Belongs to the type IA topoisomerase family.</text>
</comment>
<proteinExistence type="inferred from homology"/>
<dbReference type="EC" id="5.6.2.1" evidence="1"/>
<dbReference type="EMBL" id="BA000018">
    <property type="protein sequence ID" value="BAB43346.1"/>
    <property type="molecule type" value="Genomic_DNA"/>
</dbReference>
<dbReference type="PIR" id="A90023">
    <property type="entry name" value="A90023"/>
</dbReference>
<dbReference type="RefSeq" id="WP_000838479.1">
    <property type="nucleotide sequence ID" value="NC_002745.2"/>
</dbReference>
<dbReference type="SMR" id="Q7A455"/>
<dbReference type="EnsemblBacteria" id="BAB43346">
    <property type="protein sequence ID" value="BAB43346"/>
    <property type="gene ID" value="BAB43346"/>
</dbReference>
<dbReference type="KEGG" id="sau:SA2051"/>
<dbReference type="HOGENOM" id="CLU_002929_5_2_9"/>
<dbReference type="GO" id="GO:0043597">
    <property type="term" value="C:cytoplasmic replication fork"/>
    <property type="evidence" value="ECO:0007669"/>
    <property type="project" value="TreeGrafter"/>
</dbReference>
<dbReference type="GO" id="GO:0003677">
    <property type="term" value="F:DNA binding"/>
    <property type="evidence" value="ECO:0007669"/>
    <property type="project" value="UniProtKB-KW"/>
</dbReference>
<dbReference type="GO" id="GO:0003917">
    <property type="term" value="F:DNA topoisomerase type I (single strand cut, ATP-independent) activity"/>
    <property type="evidence" value="ECO:0007669"/>
    <property type="project" value="UniProtKB-UniRule"/>
</dbReference>
<dbReference type="GO" id="GO:0000287">
    <property type="term" value="F:magnesium ion binding"/>
    <property type="evidence" value="ECO:0007669"/>
    <property type="project" value="UniProtKB-UniRule"/>
</dbReference>
<dbReference type="GO" id="GO:0006310">
    <property type="term" value="P:DNA recombination"/>
    <property type="evidence" value="ECO:0007669"/>
    <property type="project" value="TreeGrafter"/>
</dbReference>
<dbReference type="GO" id="GO:0006281">
    <property type="term" value="P:DNA repair"/>
    <property type="evidence" value="ECO:0007669"/>
    <property type="project" value="TreeGrafter"/>
</dbReference>
<dbReference type="GO" id="GO:0006265">
    <property type="term" value="P:DNA topological change"/>
    <property type="evidence" value="ECO:0007669"/>
    <property type="project" value="UniProtKB-UniRule"/>
</dbReference>
<dbReference type="CDD" id="cd00186">
    <property type="entry name" value="TOP1Ac"/>
    <property type="match status" value="1"/>
</dbReference>
<dbReference type="CDD" id="cd03362">
    <property type="entry name" value="TOPRIM_TopoIA_TopoIII"/>
    <property type="match status" value="1"/>
</dbReference>
<dbReference type="Gene3D" id="3.40.50.140">
    <property type="match status" value="1"/>
</dbReference>
<dbReference type="Gene3D" id="1.10.460.10">
    <property type="entry name" value="Topoisomerase I, domain 2"/>
    <property type="match status" value="1"/>
</dbReference>
<dbReference type="Gene3D" id="2.70.20.10">
    <property type="entry name" value="Topoisomerase I, domain 3"/>
    <property type="match status" value="1"/>
</dbReference>
<dbReference type="Gene3D" id="1.10.290.10">
    <property type="entry name" value="Topoisomerase I, domain 4"/>
    <property type="match status" value="1"/>
</dbReference>
<dbReference type="HAMAP" id="MF_00953">
    <property type="entry name" value="Topoisom_3_prok"/>
    <property type="match status" value="1"/>
</dbReference>
<dbReference type="InterPro" id="IPR000380">
    <property type="entry name" value="Topo_IA"/>
</dbReference>
<dbReference type="InterPro" id="IPR003601">
    <property type="entry name" value="Topo_IA_2"/>
</dbReference>
<dbReference type="InterPro" id="IPR023406">
    <property type="entry name" value="Topo_IA_AS"/>
</dbReference>
<dbReference type="InterPro" id="IPR013497">
    <property type="entry name" value="Topo_IA_cen"/>
</dbReference>
<dbReference type="InterPro" id="IPR013824">
    <property type="entry name" value="Topo_IA_cen_sub1"/>
</dbReference>
<dbReference type="InterPro" id="IPR013825">
    <property type="entry name" value="Topo_IA_cen_sub2"/>
</dbReference>
<dbReference type="InterPro" id="IPR013826">
    <property type="entry name" value="Topo_IA_cen_sub3"/>
</dbReference>
<dbReference type="InterPro" id="IPR023405">
    <property type="entry name" value="Topo_IA_core_domain"/>
</dbReference>
<dbReference type="InterPro" id="IPR003602">
    <property type="entry name" value="Topo_IA_DNA-bd_dom"/>
</dbReference>
<dbReference type="InterPro" id="IPR005738">
    <property type="entry name" value="TopoIII"/>
</dbReference>
<dbReference type="InterPro" id="IPR006171">
    <property type="entry name" value="TOPRIM_dom"/>
</dbReference>
<dbReference type="InterPro" id="IPR034144">
    <property type="entry name" value="TOPRIM_TopoIII"/>
</dbReference>
<dbReference type="NCBIfam" id="NF005829">
    <property type="entry name" value="PRK07726.1"/>
    <property type="match status" value="1"/>
</dbReference>
<dbReference type="NCBIfam" id="TIGR01056">
    <property type="entry name" value="topB"/>
    <property type="match status" value="1"/>
</dbReference>
<dbReference type="PANTHER" id="PTHR11390:SF21">
    <property type="entry name" value="DNA TOPOISOMERASE 3-ALPHA"/>
    <property type="match status" value="1"/>
</dbReference>
<dbReference type="PANTHER" id="PTHR11390">
    <property type="entry name" value="PROKARYOTIC DNA TOPOISOMERASE"/>
    <property type="match status" value="1"/>
</dbReference>
<dbReference type="Pfam" id="PF01131">
    <property type="entry name" value="Topoisom_bac"/>
    <property type="match status" value="1"/>
</dbReference>
<dbReference type="Pfam" id="PF01751">
    <property type="entry name" value="Toprim"/>
    <property type="match status" value="1"/>
</dbReference>
<dbReference type="PRINTS" id="PR00417">
    <property type="entry name" value="PRTPISMRASEI"/>
</dbReference>
<dbReference type="SMART" id="SM00437">
    <property type="entry name" value="TOP1Ac"/>
    <property type="match status" value="1"/>
</dbReference>
<dbReference type="SMART" id="SM00436">
    <property type="entry name" value="TOP1Bc"/>
    <property type="match status" value="1"/>
</dbReference>
<dbReference type="SMART" id="SM00493">
    <property type="entry name" value="TOPRIM"/>
    <property type="match status" value="1"/>
</dbReference>
<dbReference type="SUPFAM" id="SSF56712">
    <property type="entry name" value="Prokaryotic type I DNA topoisomerase"/>
    <property type="match status" value="1"/>
</dbReference>
<dbReference type="PROSITE" id="PS00396">
    <property type="entry name" value="TOPO_IA_1"/>
    <property type="match status" value="1"/>
</dbReference>
<dbReference type="PROSITE" id="PS52039">
    <property type="entry name" value="TOPO_IA_2"/>
    <property type="match status" value="1"/>
</dbReference>
<dbReference type="PROSITE" id="PS50880">
    <property type="entry name" value="TOPRIM"/>
    <property type="match status" value="1"/>
</dbReference>
<gene>
    <name evidence="1" type="primary">topB</name>
    <name type="ordered locus">SA2051</name>
</gene>
<organism>
    <name type="scientific">Staphylococcus aureus (strain N315)</name>
    <dbReference type="NCBI Taxonomy" id="158879"/>
    <lineage>
        <taxon>Bacteria</taxon>
        <taxon>Bacillati</taxon>
        <taxon>Bacillota</taxon>
        <taxon>Bacilli</taxon>
        <taxon>Bacillales</taxon>
        <taxon>Staphylococcaceae</taxon>
        <taxon>Staphylococcus</taxon>
    </lineage>
</organism>
<protein>
    <recommendedName>
        <fullName evidence="1">DNA topoisomerase 3</fullName>
        <ecNumber evidence="1">5.6.2.1</ecNumber>
    </recommendedName>
    <alternativeName>
        <fullName evidence="1">DNA topoisomerase III</fullName>
    </alternativeName>
</protein>
<evidence type="ECO:0000255" key="1">
    <source>
        <dbReference type="HAMAP-Rule" id="MF_00953"/>
    </source>
</evidence>
<evidence type="ECO:0000255" key="2">
    <source>
        <dbReference type="PROSITE-ProRule" id="PRU01383"/>
    </source>
</evidence>
<evidence type="ECO:0000256" key="3">
    <source>
        <dbReference type="SAM" id="MobiDB-lite"/>
    </source>
</evidence>
<keyword id="KW-0238">DNA-binding</keyword>
<keyword id="KW-0413">Isomerase</keyword>
<keyword id="KW-0460">Magnesium</keyword>
<keyword id="KW-0479">Metal-binding</keyword>
<keyword id="KW-0799">Topoisomerase</keyword>
<accession>Q7A455</accession>
<feature type="chain" id="PRO_0000286372" description="DNA topoisomerase 3">
    <location>
        <begin position="1"/>
        <end position="711"/>
    </location>
</feature>
<feature type="domain" description="Toprim" evidence="1">
    <location>
        <begin position="2"/>
        <end position="135"/>
    </location>
</feature>
<feature type="domain" description="Topo IA-type catalytic" evidence="2">
    <location>
        <begin position="152"/>
        <end position="580"/>
    </location>
</feature>
<feature type="region of interest" description="Interaction with DNA" evidence="1">
    <location>
        <begin position="186"/>
        <end position="191"/>
    </location>
</feature>
<feature type="region of interest" description="Disordered" evidence="3">
    <location>
        <begin position="691"/>
        <end position="711"/>
    </location>
</feature>
<feature type="active site" description="O-(5'-phospho-DNA)-tyrosine intermediate" evidence="2">
    <location>
        <position position="305"/>
    </location>
</feature>
<feature type="binding site" evidence="1">
    <location>
        <position position="8"/>
    </location>
    <ligand>
        <name>Mg(2+)</name>
        <dbReference type="ChEBI" id="CHEBI:18420"/>
        <note>catalytic</note>
    </ligand>
</feature>
<feature type="binding site" evidence="1">
    <location>
        <position position="104"/>
    </location>
    <ligand>
        <name>Mg(2+)</name>
        <dbReference type="ChEBI" id="CHEBI:18420"/>
        <note>catalytic</note>
    </ligand>
</feature>
<feature type="site" description="Interaction with DNA" evidence="1">
    <location>
        <position position="60"/>
    </location>
</feature>
<feature type="site" description="Interaction with DNA" evidence="1">
    <location>
        <position position="167"/>
    </location>
</feature>
<feature type="site" description="Interaction with DNA" evidence="1">
    <location>
        <position position="175"/>
    </location>
</feature>
<feature type="site" description="Interaction with DNA" evidence="1">
    <location>
        <position position="307"/>
    </location>
</feature>
<sequence length="711" mass="81524">MKSLILAEKPSVARDIADALQINQKRNGYFENNQYIVTWALGHLVTNATPEQYDKNLKEWRLEDLPIIPKYMKTVVIGKTSKQFKTVKALILDNKVKDIIIATDAGREGELVARLILDKVGNKKPIRRLWISSVTKKAIQQGFKNLKDGRQYNDLYYAALARSEADWIVGINATRALTTKYDAQLSLGRVQTPTIQLVNTRQQEINQFKPQQYFTLSLTVKGFDFQLESNQRYTNKETLEQMVNNLKNVDGKIKSVATKHKKSYPQSLYNLTDLQQDMYRRYKIGPKETLNTLQSLYERHKVVTYPRTDSNYLTTDMVDTMKERIQATMATTYKDQARPLMSKTFSSKMSIFNNQKVSDHHAIIPTEVRPVMSDLSNRELKLYDMIVERFLEALMPPHEYDAITVTLEVAGHTFVLKENVTTVLGFKSIRQGESITEMQQPFSEGDEVKISKTNIREHETTPPEYFNEGSLLKAMENPQNFIQLKDKKYAQTLKQTGGIGTVATRADIIDKLFNMNAIESRDGKIKVTSKGKQILELAPEELTSPLLTAQWEEKLLLIERGKYQAKTFINEMKDFTKDVVNGIKNSDRKYKHDNLTTTECPTCGKFMIKVKTKNGQMLVCQDPSCKTKKNVQRKTNARCPNCKKKLTLFGKGKEAVYRCVCGHSETQAHMDQRMKSKSSGKVSRKEMKKYMNKNEGLDNNPFKDALKNLNL</sequence>